<keyword id="KW-0686">Riboflavin biosynthesis</keyword>
<keyword id="KW-0808">Transferase</keyword>
<name>RISB_BACMK</name>
<dbReference type="EC" id="2.5.1.78" evidence="1"/>
<dbReference type="EMBL" id="CP000903">
    <property type="protein sequence ID" value="ABY45111.1"/>
    <property type="molecule type" value="Genomic_DNA"/>
</dbReference>
<dbReference type="RefSeq" id="WP_000230892.1">
    <property type="nucleotide sequence ID" value="NC_010184.1"/>
</dbReference>
<dbReference type="SMR" id="A9VG51"/>
<dbReference type="GeneID" id="87592219"/>
<dbReference type="KEGG" id="bwe:BcerKBAB4_3944"/>
<dbReference type="eggNOG" id="COG0054">
    <property type="taxonomic scope" value="Bacteria"/>
</dbReference>
<dbReference type="HOGENOM" id="CLU_089358_1_1_9"/>
<dbReference type="UniPathway" id="UPA00275">
    <property type="reaction ID" value="UER00404"/>
</dbReference>
<dbReference type="Proteomes" id="UP000002154">
    <property type="component" value="Chromosome"/>
</dbReference>
<dbReference type="GO" id="GO:0005829">
    <property type="term" value="C:cytosol"/>
    <property type="evidence" value="ECO:0007669"/>
    <property type="project" value="TreeGrafter"/>
</dbReference>
<dbReference type="GO" id="GO:0009349">
    <property type="term" value="C:riboflavin synthase complex"/>
    <property type="evidence" value="ECO:0007669"/>
    <property type="project" value="InterPro"/>
</dbReference>
<dbReference type="GO" id="GO:0000906">
    <property type="term" value="F:6,7-dimethyl-8-ribityllumazine synthase activity"/>
    <property type="evidence" value="ECO:0007669"/>
    <property type="project" value="UniProtKB-UniRule"/>
</dbReference>
<dbReference type="GO" id="GO:0009231">
    <property type="term" value="P:riboflavin biosynthetic process"/>
    <property type="evidence" value="ECO:0007669"/>
    <property type="project" value="UniProtKB-UniRule"/>
</dbReference>
<dbReference type="CDD" id="cd09209">
    <property type="entry name" value="Lumazine_synthase-I"/>
    <property type="match status" value="1"/>
</dbReference>
<dbReference type="FunFam" id="3.40.50.960:FF:000001">
    <property type="entry name" value="6,7-dimethyl-8-ribityllumazine synthase"/>
    <property type="match status" value="1"/>
</dbReference>
<dbReference type="Gene3D" id="3.40.50.960">
    <property type="entry name" value="Lumazine/riboflavin synthase"/>
    <property type="match status" value="1"/>
</dbReference>
<dbReference type="HAMAP" id="MF_00178">
    <property type="entry name" value="Lumazine_synth"/>
    <property type="match status" value="1"/>
</dbReference>
<dbReference type="InterPro" id="IPR034964">
    <property type="entry name" value="LS"/>
</dbReference>
<dbReference type="InterPro" id="IPR002180">
    <property type="entry name" value="LS/RS"/>
</dbReference>
<dbReference type="InterPro" id="IPR036467">
    <property type="entry name" value="LS/RS_sf"/>
</dbReference>
<dbReference type="NCBIfam" id="TIGR00114">
    <property type="entry name" value="lumazine-synth"/>
    <property type="match status" value="1"/>
</dbReference>
<dbReference type="NCBIfam" id="NF000812">
    <property type="entry name" value="PRK00061.1-4"/>
    <property type="match status" value="1"/>
</dbReference>
<dbReference type="PANTHER" id="PTHR21058:SF0">
    <property type="entry name" value="6,7-DIMETHYL-8-RIBITYLLUMAZINE SYNTHASE"/>
    <property type="match status" value="1"/>
</dbReference>
<dbReference type="PANTHER" id="PTHR21058">
    <property type="entry name" value="6,7-DIMETHYL-8-RIBITYLLUMAZINE SYNTHASE DMRL SYNTHASE LUMAZINE SYNTHASE"/>
    <property type="match status" value="1"/>
</dbReference>
<dbReference type="Pfam" id="PF00885">
    <property type="entry name" value="DMRL_synthase"/>
    <property type="match status" value="1"/>
</dbReference>
<dbReference type="SUPFAM" id="SSF52121">
    <property type="entry name" value="Lumazine synthase"/>
    <property type="match status" value="1"/>
</dbReference>
<evidence type="ECO:0000255" key="1">
    <source>
        <dbReference type="HAMAP-Rule" id="MF_00178"/>
    </source>
</evidence>
<accession>A9VG51</accession>
<proteinExistence type="inferred from homology"/>
<comment type="function">
    <text evidence="1">Catalyzes the formation of 6,7-dimethyl-8-ribityllumazine by condensation of 5-amino-6-(D-ribitylamino)uracil with 3,4-dihydroxy-2-butanone 4-phosphate. This is the penultimate step in the biosynthesis of riboflavin.</text>
</comment>
<comment type="catalytic activity">
    <reaction evidence="1">
        <text>(2S)-2-hydroxy-3-oxobutyl phosphate + 5-amino-6-(D-ribitylamino)uracil = 6,7-dimethyl-8-(1-D-ribityl)lumazine + phosphate + 2 H2O + H(+)</text>
        <dbReference type="Rhea" id="RHEA:26152"/>
        <dbReference type="ChEBI" id="CHEBI:15377"/>
        <dbReference type="ChEBI" id="CHEBI:15378"/>
        <dbReference type="ChEBI" id="CHEBI:15934"/>
        <dbReference type="ChEBI" id="CHEBI:43474"/>
        <dbReference type="ChEBI" id="CHEBI:58201"/>
        <dbReference type="ChEBI" id="CHEBI:58830"/>
        <dbReference type="EC" id="2.5.1.78"/>
    </reaction>
</comment>
<comment type="pathway">
    <text evidence="1">Cofactor biosynthesis; riboflavin biosynthesis; riboflavin from 2-hydroxy-3-oxobutyl phosphate and 5-amino-6-(D-ribitylamino)uracil: step 1/2.</text>
</comment>
<comment type="subunit">
    <text evidence="1">Forms an icosahedral capsid composed of 60 subunits, arranged as a dodecamer of pentamers.</text>
</comment>
<comment type="similarity">
    <text evidence="1">Belongs to the DMRL synthase family.</text>
</comment>
<gene>
    <name evidence="1" type="primary">ribH</name>
    <name type="ordered locus">BcerKBAB4_3944</name>
</gene>
<sequence length="153" mass="16246">MVFEGHLVGTGLKVGVVVGRFNEFITSKLLGGALDGLKRHGVEENDIDVAWVPGAFEIPLIAKKMANSGKYDAVITLGTVIRGATTHYDYVCNEVAKGVASLSLQTDIPVIFGVLTTETIEQAIERAGTKAGNKGYESAVAAIEMAHLSKQWA</sequence>
<feature type="chain" id="PRO_1000098162" description="6,7-dimethyl-8-ribityllumazine synthase">
    <location>
        <begin position="1"/>
        <end position="153"/>
    </location>
</feature>
<feature type="active site" description="Proton donor" evidence="1">
    <location>
        <position position="87"/>
    </location>
</feature>
<feature type="binding site" evidence="1">
    <location>
        <position position="21"/>
    </location>
    <ligand>
        <name>5-amino-6-(D-ribitylamino)uracil</name>
        <dbReference type="ChEBI" id="CHEBI:15934"/>
    </ligand>
</feature>
<feature type="binding site" evidence="1">
    <location>
        <begin position="55"/>
        <end position="57"/>
    </location>
    <ligand>
        <name>5-amino-6-(D-ribitylamino)uracil</name>
        <dbReference type="ChEBI" id="CHEBI:15934"/>
    </ligand>
</feature>
<feature type="binding site" evidence="1">
    <location>
        <begin position="79"/>
        <end position="81"/>
    </location>
    <ligand>
        <name>5-amino-6-(D-ribitylamino)uracil</name>
        <dbReference type="ChEBI" id="CHEBI:15934"/>
    </ligand>
</feature>
<feature type="binding site" evidence="1">
    <location>
        <begin position="84"/>
        <end position="85"/>
    </location>
    <ligand>
        <name>(2S)-2-hydroxy-3-oxobutyl phosphate</name>
        <dbReference type="ChEBI" id="CHEBI:58830"/>
    </ligand>
</feature>
<feature type="binding site" evidence="1">
    <location>
        <position position="112"/>
    </location>
    <ligand>
        <name>5-amino-6-(D-ribitylamino)uracil</name>
        <dbReference type="ChEBI" id="CHEBI:15934"/>
    </ligand>
</feature>
<feature type="binding site" evidence="1">
    <location>
        <position position="126"/>
    </location>
    <ligand>
        <name>(2S)-2-hydroxy-3-oxobutyl phosphate</name>
        <dbReference type="ChEBI" id="CHEBI:58830"/>
    </ligand>
</feature>
<organism>
    <name type="scientific">Bacillus mycoides (strain KBAB4)</name>
    <name type="common">Bacillus weihenstephanensis</name>
    <dbReference type="NCBI Taxonomy" id="315730"/>
    <lineage>
        <taxon>Bacteria</taxon>
        <taxon>Bacillati</taxon>
        <taxon>Bacillota</taxon>
        <taxon>Bacilli</taxon>
        <taxon>Bacillales</taxon>
        <taxon>Bacillaceae</taxon>
        <taxon>Bacillus</taxon>
        <taxon>Bacillus cereus group</taxon>
    </lineage>
</organism>
<reference key="1">
    <citation type="journal article" date="2008" name="Chem. Biol. Interact.">
        <title>Extending the Bacillus cereus group genomics to putative food-borne pathogens of different toxicity.</title>
        <authorList>
            <person name="Lapidus A."/>
            <person name="Goltsman E."/>
            <person name="Auger S."/>
            <person name="Galleron N."/>
            <person name="Segurens B."/>
            <person name="Dossat C."/>
            <person name="Land M.L."/>
            <person name="Broussolle V."/>
            <person name="Brillard J."/>
            <person name="Guinebretiere M.-H."/>
            <person name="Sanchis V."/>
            <person name="Nguen-the C."/>
            <person name="Lereclus D."/>
            <person name="Richardson P."/>
            <person name="Wincker P."/>
            <person name="Weissenbach J."/>
            <person name="Ehrlich S.D."/>
            <person name="Sorokin A."/>
        </authorList>
    </citation>
    <scope>NUCLEOTIDE SEQUENCE [LARGE SCALE GENOMIC DNA]</scope>
    <source>
        <strain>KBAB4</strain>
    </source>
</reference>
<protein>
    <recommendedName>
        <fullName evidence="1">6,7-dimethyl-8-ribityllumazine synthase</fullName>
        <shortName evidence="1">DMRL synthase</shortName>
        <shortName evidence="1">LS</shortName>
        <shortName evidence="1">Lumazine synthase</shortName>
        <ecNumber evidence="1">2.5.1.78</ecNumber>
    </recommendedName>
</protein>